<protein>
    <recommendedName>
        <fullName evidence="1">tRNA uridine 5-carboxymethylaminomethyl modification enzyme MnmG</fullName>
    </recommendedName>
    <alternativeName>
        <fullName evidence="1">Glucose-inhibited division protein A</fullName>
    </alternativeName>
</protein>
<evidence type="ECO:0000255" key="1">
    <source>
        <dbReference type="HAMAP-Rule" id="MF_00129"/>
    </source>
</evidence>
<dbReference type="EMBL" id="CP000247">
    <property type="protein sequence ID" value="ABG71911.1"/>
    <property type="molecule type" value="Genomic_DNA"/>
</dbReference>
<dbReference type="RefSeq" id="WP_000499788.1">
    <property type="nucleotide sequence ID" value="NC_008253.1"/>
</dbReference>
<dbReference type="SMR" id="Q0TAW8"/>
<dbReference type="GeneID" id="75205459"/>
<dbReference type="KEGG" id="ecp:ECP_3940"/>
<dbReference type="HOGENOM" id="CLU_007831_2_2_6"/>
<dbReference type="Proteomes" id="UP000009182">
    <property type="component" value="Chromosome"/>
</dbReference>
<dbReference type="GO" id="GO:0005829">
    <property type="term" value="C:cytosol"/>
    <property type="evidence" value="ECO:0007669"/>
    <property type="project" value="TreeGrafter"/>
</dbReference>
<dbReference type="GO" id="GO:0050660">
    <property type="term" value="F:flavin adenine dinucleotide binding"/>
    <property type="evidence" value="ECO:0007669"/>
    <property type="project" value="UniProtKB-UniRule"/>
</dbReference>
<dbReference type="GO" id="GO:0030488">
    <property type="term" value="P:tRNA methylation"/>
    <property type="evidence" value="ECO:0007669"/>
    <property type="project" value="TreeGrafter"/>
</dbReference>
<dbReference type="GO" id="GO:0002098">
    <property type="term" value="P:tRNA wobble uridine modification"/>
    <property type="evidence" value="ECO:0007669"/>
    <property type="project" value="InterPro"/>
</dbReference>
<dbReference type="FunFam" id="1.10.10.1800:FF:000001">
    <property type="entry name" value="tRNA uridine 5-carboxymethylaminomethyl modification enzyme MnmG"/>
    <property type="match status" value="1"/>
</dbReference>
<dbReference type="FunFam" id="1.10.150.570:FF:000001">
    <property type="entry name" value="tRNA uridine 5-carboxymethylaminomethyl modification enzyme MnmG"/>
    <property type="match status" value="1"/>
</dbReference>
<dbReference type="FunFam" id="3.50.50.60:FF:000002">
    <property type="entry name" value="tRNA uridine 5-carboxymethylaminomethyl modification enzyme MnmG"/>
    <property type="match status" value="1"/>
</dbReference>
<dbReference type="FunFam" id="3.50.50.60:FF:000010">
    <property type="entry name" value="tRNA uridine 5-carboxymethylaminomethyl modification enzyme MnmG"/>
    <property type="match status" value="1"/>
</dbReference>
<dbReference type="Gene3D" id="3.50.50.60">
    <property type="entry name" value="FAD/NAD(P)-binding domain"/>
    <property type="match status" value="2"/>
</dbReference>
<dbReference type="Gene3D" id="1.10.150.570">
    <property type="entry name" value="GidA associated domain, C-terminal subdomain"/>
    <property type="match status" value="1"/>
</dbReference>
<dbReference type="Gene3D" id="1.10.10.1800">
    <property type="entry name" value="tRNA uridine 5-carboxymethylaminomethyl modification enzyme MnmG/GidA"/>
    <property type="match status" value="1"/>
</dbReference>
<dbReference type="HAMAP" id="MF_00129">
    <property type="entry name" value="MnmG_GidA"/>
    <property type="match status" value="1"/>
</dbReference>
<dbReference type="InterPro" id="IPR036188">
    <property type="entry name" value="FAD/NAD-bd_sf"/>
</dbReference>
<dbReference type="InterPro" id="IPR049312">
    <property type="entry name" value="GIDA_C_N"/>
</dbReference>
<dbReference type="InterPro" id="IPR004416">
    <property type="entry name" value="MnmG"/>
</dbReference>
<dbReference type="InterPro" id="IPR002218">
    <property type="entry name" value="MnmG-rel"/>
</dbReference>
<dbReference type="InterPro" id="IPR020595">
    <property type="entry name" value="MnmG-rel_CS"/>
</dbReference>
<dbReference type="InterPro" id="IPR026904">
    <property type="entry name" value="MnmG_C"/>
</dbReference>
<dbReference type="InterPro" id="IPR047001">
    <property type="entry name" value="MnmG_C_subdom"/>
</dbReference>
<dbReference type="InterPro" id="IPR044920">
    <property type="entry name" value="MnmG_C_subdom_sf"/>
</dbReference>
<dbReference type="InterPro" id="IPR040131">
    <property type="entry name" value="MnmG_N"/>
</dbReference>
<dbReference type="NCBIfam" id="TIGR00136">
    <property type="entry name" value="mnmG_gidA"/>
    <property type="match status" value="1"/>
</dbReference>
<dbReference type="PANTHER" id="PTHR11806">
    <property type="entry name" value="GLUCOSE INHIBITED DIVISION PROTEIN A"/>
    <property type="match status" value="1"/>
</dbReference>
<dbReference type="PANTHER" id="PTHR11806:SF0">
    <property type="entry name" value="PROTEIN MTO1 HOMOLOG, MITOCHONDRIAL"/>
    <property type="match status" value="1"/>
</dbReference>
<dbReference type="Pfam" id="PF01134">
    <property type="entry name" value="GIDA"/>
    <property type="match status" value="1"/>
</dbReference>
<dbReference type="Pfam" id="PF21680">
    <property type="entry name" value="GIDA_C_1st"/>
    <property type="match status" value="1"/>
</dbReference>
<dbReference type="Pfam" id="PF13932">
    <property type="entry name" value="SAM_GIDA_C"/>
    <property type="match status" value="1"/>
</dbReference>
<dbReference type="SMART" id="SM01228">
    <property type="entry name" value="GIDA_assoc_3"/>
    <property type="match status" value="1"/>
</dbReference>
<dbReference type="SUPFAM" id="SSF51905">
    <property type="entry name" value="FAD/NAD(P)-binding domain"/>
    <property type="match status" value="1"/>
</dbReference>
<dbReference type="PROSITE" id="PS01280">
    <property type="entry name" value="GIDA_1"/>
    <property type="match status" value="1"/>
</dbReference>
<dbReference type="PROSITE" id="PS01281">
    <property type="entry name" value="GIDA_2"/>
    <property type="match status" value="1"/>
</dbReference>
<reference key="1">
    <citation type="journal article" date="2006" name="Mol. Microbiol.">
        <title>Role of pathogenicity island-associated integrases in the genome plasticity of uropathogenic Escherichia coli strain 536.</title>
        <authorList>
            <person name="Hochhut B."/>
            <person name="Wilde C."/>
            <person name="Balling G."/>
            <person name="Middendorf B."/>
            <person name="Dobrindt U."/>
            <person name="Brzuszkiewicz E."/>
            <person name="Gottschalk G."/>
            <person name="Carniel E."/>
            <person name="Hacker J."/>
        </authorList>
    </citation>
    <scope>NUCLEOTIDE SEQUENCE [LARGE SCALE GENOMIC DNA]</scope>
    <source>
        <strain>536 / UPEC</strain>
    </source>
</reference>
<feature type="chain" id="PRO_1000016593" description="tRNA uridine 5-carboxymethylaminomethyl modification enzyme MnmG">
    <location>
        <begin position="1"/>
        <end position="629"/>
    </location>
</feature>
<feature type="binding site" evidence="1">
    <location>
        <begin position="13"/>
        <end position="18"/>
    </location>
    <ligand>
        <name>FAD</name>
        <dbReference type="ChEBI" id="CHEBI:57692"/>
    </ligand>
</feature>
<feature type="binding site" evidence="1">
    <location>
        <position position="125"/>
    </location>
    <ligand>
        <name>FAD</name>
        <dbReference type="ChEBI" id="CHEBI:57692"/>
    </ligand>
</feature>
<feature type="binding site" evidence="1">
    <location>
        <position position="180"/>
    </location>
    <ligand>
        <name>FAD</name>
        <dbReference type="ChEBI" id="CHEBI:57692"/>
    </ligand>
</feature>
<feature type="binding site" evidence="1">
    <location>
        <begin position="273"/>
        <end position="287"/>
    </location>
    <ligand>
        <name>NAD(+)</name>
        <dbReference type="ChEBI" id="CHEBI:57540"/>
    </ligand>
</feature>
<feature type="binding site" evidence="1">
    <location>
        <position position="370"/>
    </location>
    <ligand>
        <name>FAD</name>
        <dbReference type="ChEBI" id="CHEBI:57692"/>
    </ligand>
</feature>
<accession>Q0TAW8</accession>
<organism>
    <name type="scientific">Escherichia coli O6:K15:H31 (strain 536 / UPEC)</name>
    <dbReference type="NCBI Taxonomy" id="362663"/>
    <lineage>
        <taxon>Bacteria</taxon>
        <taxon>Pseudomonadati</taxon>
        <taxon>Pseudomonadota</taxon>
        <taxon>Gammaproteobacteria</taxon>
        <taxon>Enterobacterales</taxon>
        <taxon>Enterobacteriaceae</taxon>
        <taxon>Escherichia</taxon>
    </lineage>
</organism>
<comment type="function">
    <text evidence="1">NAD-binding protein involved in the addition of a carboxymethylaminomethyl (cmnm) group at the wobble position (U34) of certain tRNAs, forming tRNA-cmnm(5)s(2)U34.</text>
</comment>
<comment type="cofactor">
    <cofactor evidence="1">
        <name>FAD</name>
        <dbReference type="ChEBI" id="CHEBI:57692"/>
    </cofactor>
</comment>
<comment type="subunit">
    <text evidence="1">Homodimer. Heterotetramer of two MnmE and two MnmG subunits.</text>
</comment>
<comment type="subcellular location">
    <subcellularLocation>
        <location evidence="1">Cytoplasm</location>
    </subcellularLocation>
</comment>
<comment type="similarity">
    <text evidence="1">Belongs to the MnmG family.</text>
</comment>
<proteinExistence type="inferred from homology"/>
<gene>
    <name evidence="1" type="primary">mnmG</name>
    <name evidence="1" type="synonym">gidA</name>
    <name type="ordered locus">ECP_3940</name>
</gene>
<name>MNMG_ECOL5</name>
<keyword id="KW-0963">Cytoplasm</keyword>
<keyword id="KW-0274">FAD</keyword>
<keyword id="KW-0285">Flavoprotein</keyword>
<keyword id="KW-0520">NAD</keyword>
<keyword id="KW-0819">tRNA processing</keyword>
<sequence length="629" mass="69521">MFYPDPFDVIIIGGGHAGTEAAMAAARMGQQTLLLTHNIDTLGQMSCNPAIGGIGKGHLVKEVDALGGLMAKAIDQAGIQFRILNASKGPAVRATRAQADRVLYRQAVRTALENQPNLMIFQQAVEDLIVENDRVVGAVTQMGLKFRAKAVVLTVGTFLDGKIHIGLDNYSGGRAGDPPSIPLSRRLRELPLRVGRLKTGTPPRIDARTIDFSVLAQQHGDNPMPVFSFMGNASQHPQQVPCYITHTNEKTHDVIRSNLDRSPMYAGVIEGVGPRYCPSIEDKVMRFADRNQHQIFLEPEGLTSNEIYPNGISTSLPFDVQMQIVRSMQGMENAKIVRPGYAIEYDFFDPRDLKPTLESKFIQGLFFAGQINGTTGYEEAAAQGLLAGLNAARLSADKEGWAPARSQAYLGVLVDDLCTLGTKEPYRMFTSRAEYRLMLREDNADLRLTEIGRELGLVDDERWARFNEKLENIERERQRLKSTWVTPSAEAAAEVNAHLTAPLSREASGEDLLRRPEMTYEKLTTLTPFAPALTDEQAAEQVEIQVKYEGYIARQQDEIEKQLRNENTLLPATLDYRQVSGLSNEVIAKLNDHKPASIGQASRISGVTPAAISILLVWLKKQGMLRRSA</sequence>